<dbReference type="EMBL" id="AC011807">
    <property type="protein sequence ID" value="AAG13042.1"/>
    <property type="molecule type" value="Genomic_DNA"/>
</dbReference>
<dbReference type="EMBL" id="CP002684">
    <property type="protein sequence ID" value="AEE32442.1"/>
    <property type="molecule type" value="Genomic_DNA"/>
</dbReference>
<dbReference type="EMBL" id="AK221631">
    <property type="protein sequence ID" value="BAD95259.1"/>
    <property type="molecule type" value="mRNA"/>
</dbReference>
<dbReference type="EMBL" id="AY086694">
    <property type="protein sequence ID" value="AAM63748.1"/>
    <property type="molecule type" value="mRNA"/>
</dbReference>
<dbReference type="PIR" id="B96532">
    <property type="entry name" value="B96532"/>
</dbReference>
<dbReference type="RefSeq" id="NP_564549.1">
    <property type="nucleotide sequence ID" value="NM_103844.3"/>
</dbReference>
<dbReference type="SMR" id="Q9FX84"/>
<dbReference type="FunCoup" id="Q9FX84">
    <property type="interactions" value="34"/>
</dbReference>
<dbReference type="IntAct" id="Q9FX84">
    <property type="interactions" value="4"/>
</dbReference>
<dbReference type="STRING" id="3702.Q9FX84"/>
<dbReference type="GlyGen" id="Q9FX84">
    <property type="glycosylation" value="1 site"/>
</dbReference>
<dbReference type="PaxDb" id="3702-AT1G49560.1"/>
<dbReference type="EnsemblPlants" id="AT1G49560.1">
    <property type="protein sequence ID" value="AT1G49560.1"/>
    <property type="gene ID" value="AT1G49560"/>
</dbReference>
<dbReference type="GeneID" id="841380"/>
<dbReference type="Gramene" id="AT1G49560.1">
    <property type="protein sequence ID" value="AT1G49560.1"/>
    <property type="gene ID" value="AT1G49560"/>
</dbReference>
<dbReference type="KEGG" id="ath:AT1G49560"/>
<dbReference type="Araport" id="AT1G49560"/>
<dbReference type="TAIR" id="AT1G49560">
    <property type="gene designation" value="HHO6"/>
</dbReference>
<dbReference type="eggNOG" id="ENOG502QWQD">
    <property type="taxonomic scope" value="Eukaryota"/>
</dbReference>
<dbReference type="HOGENOM" id="CLU_036551_1_0_1"/>
<dbReference type="InParanoid" id="Q9FX84"/>
<dbReference type="OMA" id="NKRCSEM"/>
<dbReference type="OrthoDB" id="1908613at2759"/>
<dbReference type="PhylomeDB" id="Q9FX84"/>
<dbReference type="PRO" id="PR:Q9FX84"/>
<dbReference type="Proteomes" id="UP000006548">
    <property type="component" value="Chromosome 1"/>
</dbReference>
<dbReference type="ExpressionAtlas" id="Q9FX84">
    <property type="expression patterns" value="baseline and differential"/>
</dbReference>
<dbReference type="GO" id="GO:0005634">
    <property type="term" value="C:nucleus"/>
    <property type="evidence" value="ECO:0007669"/>
    <property type="project" value="UniProtKB-SubCell"/>
</dbReference>
<dbReference type="GO" id="GO:0003700">
    <property type="term" value="F:DNA-binding transcription factor activity"/>
    <property type="evidence" value="ECO:0000250"/>
    <property type="project" value="TAIR"/>
</dbReference>
<dbReference type="GO" id="GO:0000976">
    <property type="term" value="F:transcription cis-regulatory region binding"/>
    <property type="evidence" value="ECO:0000353"/>
    <property type="project" value="TAIR"/>
</dbReference>
<dbReference type="GO" id="GO:0006355">
    <property type="term" value="P:regulation of DNA-templated transcription"/>
    <property type="evidence" value="ECO:0000304"/>
    <property type="project" value="TAIR"/>
</dbReference>
<dbReference type="FunFam" id="1.10.10.60:FF:000002">
    <property type="entry name" value="Myb family transcription factor"/>
    <property type="match status" value="1"/>
</dbReference>
<dbReference type="Gene3D" id="1.10.10.60">
    <property type="entry name" value="Homeodomain-like"/>
    <property type="match status" value="1"/>
</dbReference>
<dbReference type="InterPro" id="IPR009057">
    <property type="entry name" value="Homeodomain-like_sf"/>
</dbReference>
<dbReference type="InterPro" id="IPR044787">
    <property type="entry name" value="HRS1-like"/>
</dbReference>
<dbReference type="InterPro" id="IPR017930">
    <property type="entry name" value="Myb_dom"/>
</dbReference>
<dbReference type="InterPro" id="IPR006447">
    <property type="entry name" value="Myb_dom_plants"/>
</dbReference>
<dbReference type="InterPro" id="IPR001005">
    <property type="entry name" value="SANT/Myb"/>
</dbReference>
<dbReference type="NCBIfam" id="TIGR01557">
    <property type="entry name" value="myb_SHAQKYF"/>
    <property type="match status" value="1"/>
</dbReference>
<dbReference type="PANTHER" id="PTHR31003:SF3">
    <property type="entry name" value="HOMEODOMAIN-LIKE SUPERFAMILY PROTEIN-RELATED"/>
    <property type="match status" value="1"/>
</dbReference>
<dbReference type="PANTHER" id="PTHR31003">
    <property type="entry name" value="MYB FAMILY TRANSCRIPTION FACTOR"/>
    <property type="match status" value="1"/>
</dbReference>
<dbReference type="Pfam" id="PF00249">
    <property type="entry name" value="Myb_DNA-binding"/>
    <property type="match status" value="1"/>
</dbReference>
<dbReference type="SUPFAM" id="SSF46689">
    <property type="entry name" value="Homeodomain-like"/>
    <property type="match status" value="1"/>
</dbReference>
<dbReference type="PROSITE" id="PS51294">
    <property type="entry name" value="HTH_MYB"/>
    <property type="match status" value="1"/>
</dbReference>
<proteinExistence type="evidence at transcript level"/>
<gene>
    <name evidence="4" type="primary">HHO6</name>
    <name evidence="5" type="ordered locus">At1g49560</name>
    <name evidence="6" type="ORF">F14J22.20</name>
</gene>
<keyword id="KW-0238">DNA-binding</keyword>
<keyword id="KW-0539">Nucleus</keyword>
<keyword id="KW-1185">Reference proteome</keyword>
<keyword id="KW-0804">Transcription</keyword>
<keyword id="KW-0805">Transcription regulation</keyword>
<name>HHO6_ARATH</name>
<organism>
    <name type="scientific">Arabidopsis thaliana</name>
    <name type="common">Mouse-ear cress</name>
    <dbReference type="NCBI Taxonomy" id="3702"/>
    <lineage>
        <taxon>Eukaryota</taxon>
        <taxon>Viridiplantae</taxon>
        <taxon>Streptophyta</taxon>
        <taxon>Embryophyta</taxon>
        <taxon>Tracheophyta</taxon>
        <taxon>Spermatophyta</taxon>
        <taxon>Magnoliopsida</taxon>
        <taxon>eudicotyledons</taxon>
        <taxon>Gunneridae</taxon>
        <taxon>Pentapetalae</taxon>
        <taxon>rosids</taxon>
        <taxon>malvids</taxon>
        <taxon>Brassicales</taxon>
        <taxon>Brassicaceae</taxon>
        <taxon>Camelineae</taxon>
        <taxon>Arabidopsis</taxon>
    </lineage>
</organism>
<reference key="1">
    <citation type="journal article" date="2000" name="Nature">
        <title>Sequence and analysis of chromosome 1 of the plant Arabidopsis thaliana.</title>
        <authorList>
            <person name="Theologis A."/>
            <person name="Ecker J.R."/>
            <person name="Palm C.J."/>
            <person name="Federspiel N.A."/>
            <person name="Kaul S."/>
            <person name="White O."/>
            <person name="Alonso J."/>
            <person name="Altafi H."/>
            <person name="Araujo R."/>
            <person name="Bowman C.L."/>
            <person name="Brooks S.Y."/>
            <person name="Buehler E."/>
            <person name="Chan A."/>
            <person name="Chao Q."/>
            <person name="Chen H."/>
            <person name="Cheuk R.F."/>
            <person name="Chin C.W."/>
            <person name="Chung M.K."/>
            <person name="Conn L."/>
            <person name="Conway A.B."/>
            <person name="Conway A.R."/>
            <person name="Creasy T.H."/>
            <person name="Dewar K."/>
            <person name="Dunn P."/>
            <person name="Etgu P."/>
            <person name="Feldblyum T.V."/>
            <person name="Feng J.-D."/>
            <person name="Fong B."/>
            <person name="Fujii C.Y."/>
            <person name="Gill J.E."/>
            <person name="Goldsmith A.D."/>
            <person name="Haas B."/>
            <person name="Hansen N.F."/>
            <person name="Hughes B."/>
            <person name="Huizar L."/>
            <person name="Hunter J.L."/>
            <person name="Jenkins J."/>
            <person name="Johnson-Hopson C."/>
            <person name="Khan S."/>
            <person name="Khaykin E."/>
            <person name="Kim C.J."/>
            <person name="Koo H.L."/>
            <person name="Kremenetskaia I."/>
            <person name="Kurtz D.B."/>
            <person name="Kwan A."/>
            <person name="Lam B."/>
            <person name="Langin-Hooper S."/>
            <person name="Lee A."/>
            <person name="Lee J.M."/>
            <person name="Lenz C.A."/>
            <person name="Li J.H."/>
            <person name="Li Y.-P."/>
            <person name="Lin X."/>
            <person name="Liu S.X."/>
            <person name="Liu Z.A."/>
            <person name="Luros J.S."/>
            <person name="Maiti R."/>
            <person name="Marziali A."/>
            <person name="Militscher J."/>
            <person name="Miranda M."/>
            <person name="Nguyen M."/>
            <person name="Nierman W.C."/>
            <person name="Osborne B.I."/>
            <person name="Pai G."/>
            <person name="Peterson J."/>
            <person name="Pham P.K."/>
            <person name="Rizzo M."/>
            <person name="Rooney T."/>
            <person name="Rowley D."/>
            <person name="Sakano H."/>
            <person name="Salzberg S.L."/>
            <person name="Schwartz J.R."/>
            <person name="Shinn P."/>
            <person name="Southwick A.M."/>
            <person name="Sun H."/>
            <person name="Tallon L.J."/>
            <person name="Tambunga G."/>
            <person name="Toriumi M.J."/>
            <person name="Town C.D."/>
            <person name="Utterback T."/>
            <person name="Van Aken S."/>
            <person name="Vaysberg M."/>
            <person name="Vysotskaia V.S."/>
            <person name="Walker M."/>
            <person name="Wu D."/>
            <person name="Yu G."/>
            <person name="Fraser C.M."/>
            <person name="Venter J.C."/>
            <person name="Davis R.W."/>
        </authorList>
    </citation>
    <scope>NUCLEOTIDE SEQUENCE [LARGE SCALE GENOMIC DNA]</scope>
    <source>
        <strain>cv. Columbia</strain>
    </source>
</reference>
<reference key="2">
    <citation type="journal article" date="2017" name="Plant J.">
        <title>Araport11: a complete reannotation of the Arabidopsis thaliana reference genome.</title>
        <authorList>
            <person name="Cheng C.Y."/>
            <person name="Krishnakumar V."/>
            <person name="Chan A.P."/>
            <person name="Thibaud-Nissen F."/>
            <person name="Schobel S."/>
            <person name="Town C.D."/>
        </authorList>
    </citation>
    <scope>GENOME REANNOTATION</scope>
    <source>
        <strain>cv. Columbia</strain>
    </source>
</reference>
<reference key="3">
    <citation type="submission" date="2005-03" db="EMBL/GenBank/DDBJ databases">
        <title>Large-scale analysis of RIKEN Arabidopsis full-length (RAFL) cDNAs.</title>
        <authorList>
            <person name="Totoki Y."/>
            <person name="Seki M."/>
            <person name="Ishida J."/>
            <person name="Nakajima M."/>
            <person name="Enju A."/>
            <person name="Kamiya A."/>
            <person name="Narusaka M."/>
            <person name="Shin-i T."/>
            <person name="Nakagawa M."/>
            <person name="Sakamoto N."/>
            <person name="Oishi K."/>
            <person name="Kohara Y."/>
            <person name="Kobayashi M."/>
            <person name="Toyoda A."/>
            <person name="Sakaki Y."/>
            <person name="Sakurai T."/>
            <person name="Iida K."/>
            <person name="Akiyama K."/>
            <person name="Satou M."/>
            <person name="Toyoda T."/>
            <person name="Konagaya A."/>
            <person name="Carninci P."/>
            <person name="Kawai J."/>
            <person name="Hayashizaki Y."/>
            <person name="Shinozaki K."/>
        </authorList>
    </citation>
    <scope>NUCLEOTIDE SEQUENCE [LARGE SCALE MRNA]</scope>
    <source>
        <strain>cv. Columbia</strain>
    </source>
</reference>
<reference key="4">
    <citation type="submission" date="2002-03" db="EMBL/GenBank/DDBJ databases">
        <title>Full-length cDNA from Arabidopsis thaliana.</title>
        <authorList>
            <person name="Brover V.V."/>
            <person name="Troukhan M.E."/>
            <person name="Alexandrov N.A."/>
            <person name="Lu Y.-P."/>
            <person name="Flavell R.B."/>
            <person name="Feldmann K.A."/>
        </authorList>
    </citation>
    <scope>NUCLEOTIDE SEQUENCE [LARGE SCALE MRNA]</scope>
</reference>
<evidence type="ECO:0000250" key="1">
    <source>
        <dbReference type="UniProtKB" id="Q9FX67"/>
    </source>
</evidence>
<evidence type="ECO:0000255" key="2">
    <source>
        <dbReference type="PROSITE-ProRule" id="PRU00625"/>
    </source>
</evidence>
<evidence type="ECO:0000256" key="3">
    <source>
        <dbReference type="SAM" id="MobiDB-lite"/>
    </source>
</evidence>
<evidence type="ECO:0000305" key="4"/>
<evidence type="ECO:0000312" key="5">
    <source>
        <dbReference type="Araport" id="AT1G49560"/>
    </source>
</evidence>
<evidence type="ECO:0000312" key="6">
    <source>
        <dbReference type="EMBL" id="AAG13042.1"/>
    </source>
</evidence>
<comment type="function">
    <text evidence="1">Probable transcription factor involved in phosphate signaling in roots.</text>
</comment>
<comment type="subcellular location">
    <subcellularLocation>
        <location evidence="2">Nucleus</location>
    </subcellularLocation>
</comment>
<feature type="chain" id="PRO_0000439548" description="Transcription factor HHO6">
    <location>
        <begin position="1"/>
        <end position="333"/>
    </location>
</feature>
<feature type="domain" description="HTH myb-type" evidence="2">
    <location>
        <begin position="189"/>
        <end position="249"/>
    </location>
</feature>
<feature type="DNA-binding region" description="H-T-H motif" evidence="2">
    <location>
        <begin position="220"/>
        <end position="245"/>
    </location>
</feature>
<feature type="region of interest" description="Disordered" evidence="3">
    <location>
        <begin position="274"/>
        <end position="333"/>
    </location>
</feature>
<feature type="compositionally biased region" description="Polar residues" evidence="3">
    <location>
        <begin position="287"/>
        <end position="303"/>
    </location>
</feature>
<feature type="compositionally biased region" description="Basic and acidic residues" evidence="3">
    <location>
        <begin position="319"/>
        <end position="333"/>
    </location>
</feature>
<feature type="sequence conflict" description="In Ref. 4; AAM63748." evidence="4" ref="4">
    <original>S</original>
    <variation>R</variation>
    <location>
        <position position="288"/>
    </location>
</feature>
<protein>
    <recommendedName>
        <fullName evidence="4">Transcription factor HHO6</fullName>
    </recommendedName>
    <alternativeName>
        <fullName evidence="4">MYB-domain transcription factor HHO6</fullName>
    </alternativeName>
    <alternativeName>
        <fullName evidence="4">Protein HRS1 HOMOLOG 6</fullName>
    </alternativeName>
</protein>
<accession>Q9FX84</accession>
<accession>Q8LCB3</accession>
<sequence length="333" mass="37381">MGSLGDELSLGSIFGRGVSMNVVAVEKVDEHVKKLEEEKRKLESCQLELPLSLQILNDAILYLKDKRCSEMETQPLLKDFISVNKPIQGERGIELLKREELMREKKFQQWKANDDHTSKIKSKLEIKRNEEKSPMLLIPKVETGLGLGLSSSSIRRKGIVASCGFTSNSMPQPPTPAVPQQPAFLKQQALRKQRRCWNPELHRRFVDALQQLGGPGVATPKQIREHMQEEGLTNDEVKSHLQKYRLHIRKPNSNAEKQSAVVLGFNLWNSSAQDEEETCEGGESLKRSNAQSDSPQGPLQLPSTTTTTGGDSSMEDVEDAKSESFQLERLRSP</sequence>